<protein>
    <recommendedName>
        <fullName evidence="1">7-cyano-7-deazaguanine synthase</fullName>
        <ecNumber evidence="1">6.3.4.20</ecNumber>
    </recommendedName>
    <alternativeName>
        <fullName evidence="1">7-cyano-7-carbaguanine synthase</fullName>
    </alternativeName>
    <alternativeName>
        <fullName evidence="1">PreQ(0) synthase</fullName>
    </alternativeName>
    <alternativeName>
        <fullName evidence="1">Queuosine biosynthesis protein QueC</fullName>
    </alternativeName>
</protein>
<comment type="function">
    <text evidence="1">Catalyzes the ATP-dependent conversion of 7-carboxy-7-deazaguanine (CDG) to 7-cyano-7-deazaguanine (preQ(0)).</text>
</comment>
<comment type="catalytic activity">
    <reaction evidence="1">
        <text>7-carboxy-7-deazaguanine + NH4(+) + ATP = 7-cyano-7-deazaguanine + ADP + phosphate + H2O + H(+)</text>
        <dbReference type="Rhea" id="RHEA:27982"/>
        <dbReference type="ChEBI" id="CHEBI:15377"/>
        <dbReference type="ChEBI" id="CHEBI:15378"/>
        <dbReference type="ChEBI" id="CHEBI:28938"/>
        <dbReference type="ChEBI" id="CHEBI:30616"/>
        <dbReference type="ChEBI" id="CHEBI:43474"/>
        <dbReference type="ChEBI" id="CHEBI:45075"/>
        <dbReference type="ChEBI" id="CHEBI:61036"/>
        <dbReference type="ChEBI" id="CHEBI:456216"/>
        <dbReference type="EC" id="6.3.4.20"/>
    </reaction>
</comment>
<comment type="cofactor">
    <cofactor evidence="1">
        <name>Zn(2+)</name>
        <dbReference type="ChEBI" id="CHEBI:29105"/>
    </cofactor>
    <text evidence="1">Binds 1 zinc ion per subunit.</text>
</comment>
<comment type="pathway">
    <text evidence="1">Purine metabolism; 7-cyano-7-deazaguanine biosynthesis.</text>
</comment>
<comment type="subunit">
    <text evidence="1">Homodimer.</text>
</comment>
<comment type="similarity">
    <text evidence="1">Belongs to the QueC family.</text>
</comment>
<evidence type="ECO:0000255" key="1">
    <source>
        <dbReference type="HAMAP-Rule" id="MF_01633"/>
    </source>
</evidence>
<keyword id="KW-0067">ATP-binding</keyword>
<keyword id="KW-0436">Ligase</keyword>
<keyword id="KW-0479">Metal-binding</keyword>
<keyword id="KW-0547">Nucleotide-binding</keyword>
<keyword id="KW-0671">Queuosine biosynthesis</keyword>
<keyword id="KW-0862">Zinc</keyword>
<gene>
    <name evidence="1" type="primary">queC</name>
    <name type="ordered locus">BCE_1458</name>
</gene>
<name>QUEC_BACC1</name>
<dbReference type="EC" id="6.3.4.20" evidence="1"/>
<dbReference type="EMBL" id="AE017194">
    <property type="protein sequence ID" value="AAS40387.1"/>
    <property type="molecule type" value="Genomic_DNA"/>
</dbReference>
<dbReference type="SMR" id="Q73BG0"/>
<dbReference type="KEGG" id="bca:BCE_1458"/>
<dbReference type="HOGENOM" id="CLU_081854_0_0_9"/>
<dbReference type="UniPathway" id="UPA00391"/>
<dbReference type="Proteomes" id="UP000002527">
    <property type="component" value="Chromosome"/>
</dbReference>
<dbReference type="GO" id="GO:0005524">
    <property type="term" value="F:ATP binding"/>
    <property type="evidence" value="ECO:0007669"/>
    <property type="project" value="UniProtKB-UniRule"/>
</dbReference>
<dbReference type="GO" id="GO:0016879">
    <property type="term" value="F:ligase activity, forming carbon-nitrogen bonds"/>
    <property type="evidence" value="ECO:0007669"/>
    <property type="project" value="UniProtKB-UniRule"/>
</dbReference>
<dbReference type="GO" id="GO:0008270">
    <property type="term" value="F:zinc ion binding"/>
    <property type="evidence" value="ECO:0007669"/>
    <property type="project" value="UniProtKB-UniRule"/>
</dbReference>
<dbReference type="GO" id="GO:0008616">
    <property type="term" value="P:queuosine biosynthetic process"/>
    <property type="evidence" value="ECO:0007669"/>
    <property type="project" value="UniProtKB-UniRule"/>
</dbReference>
<dbReference type="CDD" id="cd01995">
    <property type="entry name" value="QueC-like"/>
    <property type="match status" value="1"/>
</dbReference>
<dbReference type="FunFam" id="3.40.50.620:FF:000017">
    <property type="entry name" value="7-cyano-7-deazaguanine synthase"/>
    <property type="match status" value="1"/>
</dbReference>
<dbReference type="Gene3D" id="3.40.50.620">
    <property type="entry name" value="HUPs"/>
    <property type="match status" value="1"/>
</dbReference>
<dbReference type="HAMAP" id="MF_01633">
    <property type="entry name" value="QueC"/>
    <property type="match status" value="1"/>
</dbReference>
<dbReference type="InterPro" id="IPR018317">
    <property type="entry name" value="QueC"/>
</dbReference>
<dbReference type="InterPro" id="IPR014729">
    <property type="entry name" value="Rossmann-like_a/b/a_fold"/>
</dbReference>
<dbReference type="NCBIfam" id="TIGR00364">
    <property type="entry name" value="7-cyano-7-deazaguanine synthase QueC"/>
    <property type="match status" value="1"/>
</dbReference>
<dbReference type="PANTHER" id="PTHR42914">
    <property type="entry name" value="7-CYANO-7-DEAZAGUANINE SYNTHASE"/>
    <property type="match status" value="1"/>
</dbReference>
<dbReference type="PANTHER" id="PTHR42914:SF1">
    <property type="entry name" value="7-CYANO-7-DEAZAGUANINE SYNTHASE"/>
    <property type="match status" value="1"/>
</dbReference>
<dbReference type="Pfam" id="PF06508">
    <property type="entry name" value="QueC"/>
    <property type="match status" value="1"/>
</dbReference>
<dbReference type="PIRSF" id="PIRSF006293">
    <property type="entry name" value="ExsB"/>
    <property type="match status" value="1"/>
</dbReference>
<dbReference type="SUPFAM" id="SSF52402">
    <property type="entry name" value="Adenine nucleotide alpha hydrolases-like"/>
    <property type="match status" value="1"/>
</dbReference>
<reference key="1">
    <citation type="journal article" date="2004" name="Nucleic Acids Res.">
        <title>The genome sequence of Bacillus cereus ATCC 10987 reveals metabolic adaptations and a large plasmid related to Bacillus anthracis pXO1.</title>
        <authorList>
            <person name="Rasko D.A."/>
            <person name="Ravel J."/>
            <person name="Oekstad O.A."/>
            <person name="Helgason E."/>
            <person name="Cer R.Z."/>
            <person name="Jiang L."/>
            <person name="Shores K.A."/>
            <person name="Fouts D.E."/>
            <person name="Tourasse N.J."/>
            <person name="Angiuoli S.V."/>
            <person name="Kolonay J.F."/>
            <person name="Nelson W.C."/>
            <person name="Kolstoe A.-B."/>
            <person name="Fraser C.M."/>
            <person name="Read T.D."/>
        </authorList>
    </citation>
    <scope>NUCLEOTIDE SEQUENCE [LARGE SCALE GENOMIC DNA]</scope>
    <source>
        <strain>ATCC 10987 / NRS 248</strain>
    </source>
</reference>
<organism>
    <name type="scientific">Bacillus cereus (strain ATCC 10987 / NRS 248)</name>
    <dbReference type="NCBI Taxonomy" id="222523"/>
    <lineage>
        <taxon>Bacteria</taxon>
        <taxon>Bacillati</taxon>
        <taxon>Bacillota</taxon>
        <taxon>Bacilli</taxon>
        <taxon>Bacillales</taxon>
        <taxon>Bacillaceae</taxon>
        <taxon>Bacillus</taxon>
        <taxon>Bacillus cereus group</taxon>
    </lineage>
</organism>
<proteinExistence type="inferred from homology"/>
<feature type="chain" id="PRO_0000246795" description="7-cyano-7-deazaguanine synthase">
    <location>
        <begin position="1"/>
        <end position="220"/>
    </location>
</feature>
<feature type="binding site" evidence="1">
    <location>
        <begin position="10"/>
        <end position="20"/>
    </location>
    <ligand>
        <name>ATP</name>
        <dbReference type="ChEBI" id="CHEBI:30616"/>
    </ligand>
</feature>
<feature type="binding site" evidence="1">
    <location>
        <position position="186"/>
    </location>
    <ligand>
        <name>Zn(2+)</name>
        <dbReference type="ChEBI" id="CHEBI:29105"/>
    </ligand>
</feature>
<feature type="binding site" evidence="1">
    <location>
        <position position="195"/>
    </location>
    <ligand>
        <name>Zn(2+)</name>
        <dbReference type="ChEBI" id="CHEBI:29105"/>
    </ligand>
</feature>
<feature type="binding site" evidence="1">
    <location>
        <position position="198"/>
    </location>
    <ligand>
        <name>Zn(2+)</name>
        <dbReference type="ChEBI" id="CHEBI:29105"/>
    </ligand>
</feature>
<feature type="binding site" evidence="1">
    <location>
        <position position="201"/>
    </location>
    <ligand>
        <name>Zn(2+)</name>
        <dbReference type="ChEBI" id="CHEBI:29105"/>
    </ligand>
</feature>
<accession>Q73BG0</accession>
<sequence>MKKEKAVVVFSGGQDSTTCLFWAIEQFAEVEAVTFNYNQRHKLEIDCAAEIAKELGIKHTVLDMSLLNQLAPNALTRTDMEITHEEGELPSTFVDGRNLLFLSFAAVLAKQVGARHIVTGVCETDFSGYPDCRDVFVKSLNVTLNLSMDYPFVIHTPLMWIDKAETWKLSDELGAFEFVREKTLTCYNGIIGDGCGECPACQLRKAGLDTYLQEREGASN</sequence>